<protein>
    <recommendedName>
        <fullName evidence="1">6,7-dimethyl-8-ribityllumazine synthase</fullName>
        <shortName evidence="1">DMRL synthase</shortName>
        <shortName evidence="1">LS</shortName>
        <shortName evidence="1">Lumazine synthase</shortName>
        <ecNumber evidence="1">2.5.1.78</ecNumber>
    </recommendedName>
</protein>
<name>RISB_SULNB</name>
<dbReference type="EC" id="2.5.1.78" evidence="1"/>
<dbReference type="EMBL" id="AP009179">
    <property type="protein sequence ID" value="BAF72866.1"/>
    <property type="molecule type" value="Genomic_DNA"/>
</dbReference>
<dbReference type="RefSeq" id="WP_012083684.1">
    <property type="nucleotide sequence ID" value="NC_009663.1"/>
</dbReference>
<dbReference type="SMR" id="A6QBK7"/>
<dbReference type="STRING" id="387093.SUN_1919"/>
<dbReference type="KEGG" id="sun:SUN_1919"/>
<dbReference type="eggNOG" id="COG0054">
    <property type="taxonomic scope" value="Bacteria"/>
</dbReference>
<dbReference type="HOGENOM" id="CLU_089358_1_1_7"/>
<dbReference type="OrthoDB" id="9809709at2"/>
<dbReference type="UniPathway" id="UPA00275">
    <property type="reaction ID" value="UER00404"/>
</dbReference>
<dbReference type="Proteomes" id="UP000006378">
    <property type="component" value="Chromosome"/>
</dbReference>
<dbReference type="GO" id="GO:0005829">
    <property type="term" value="C:cytosol"/>
    <property type="evidence" value="ECO:0007669"/>
    <property type="project" value="TreeGrafter"/>
</dbReference>
<dbReference type="GO" id="GO:0009349">
    <property type="term" value="C:riboflavin synthase complex"/>
    <property type="evidence" value="ECO:0007669"/>
    <property type="project" value="InterPro"/>
</dbReference>
<dbReference type="GO" id="GO:0000906">
    <property type="term" value="F:6,7-dimethyl-8-ribityllumazine synthase activity"/>
    <property type="evidence" value="ECO:0007669"/>
    <property type="project" value="UniProtKB-UniRule"/>
</dbReference>
<dbReference type="GO" id="GO:0009231">
    <property type="term" value="P:riboflavin biosynthetic process"/>
    <property type="evidence" value="ECO:0007669"/>
    <property type="project" value="UniProtKB-UniRule"/>
</dbReference>
<dbReference type="CDD" id="cd09209">
    <property type="entry name" value="Lumazine_synthase-I"/>
    <property type="match status" value="1"/>
</dbReference>
<dbReference type="FunFam" id="3.40.50.960:FF:000001">
    <property type="entry name" value="6,7-dimethyl-8-ribityllumazine synthase"/>
    <property type="match status" value="1"/>
</dbReference>
<dbReference type="Gene3D" id="3.40.50.960">
    <property type="entry name" value="Lumazine/riboflavin synthase"/>
    <property type="match status" value="1"/>
</dbReference>
<dbReference type="HAMAP" id="MF_00178">
    <property type="entry name" value="Lumazine_synth"/>
    <property type="match status" value="1"/>
</dbReference>
<dbReference type="InterPro" id="IPR034964">
    <property type="entry name" value="LS"/>
</dbReference>
<dbReference type="InterPro" id="IPR002180">
    <property type="entry name" value="LS/RS"/>
</dbReference>
<dbReference type="InterPro" id="IPR036467">
    <property type="entry name" value="LS/RS_sf"/>
</dbReference>
<dbReference type="NCBIfam" id="TIGR00114">
    <property type="entry name" value="lumazine-synth"/>
    <property type="match status" value="1"/>
</dbReference>
<dbReference type="PANTHER" id="PTHR21058:SF0">
    <property type="entry name" value="6,7-DIMETHYL-8-RIBITYLLUMAZINE SYNTHASE"/>
    <property type="match status" value="1"/>
</dbReference>
<dbReference type="PANTHER" id="PTHR21058">
    <property type="entry name" value="6,7-DIMETHYL-8-RIBITYLLUMAZINE SYNTHASE DMRL SYNTHASE LUMAZINE SYNTHASE"/>
    <property type="match status" value="1"/>
</dbReference>
<dbReference type="Pfam" id="PF00885">
    <property type="entry name" value="DMRL_synthase"/>
    <property type="match status" value="1"/>
</dbReference>
<dbReference type="SUPFAM" id="SSF52121">
    <property type="entry name" value="Lumazine synthase"/>
    <property type="match status" value="1"/>
</dbReference>
<comment type="function">
    <text evidence="1">Catalyzes the formation of 6,7-dimethyl-8-ribityllumazine by condensation of 5-amino-6-(D-ribitylamino)uracil with 3,4-dihydroxy-2-butanone 4-phosphate. This is the penultimate step in the biosynthesis of riboflavin.</text>
</comment>
<comment type="catalytic activity">
    <reaction evidence="1">
        <text>(2S)-2-hydroxy-3-oxobutyl phosphate + 5-amino-6-(D-ribitylamino)uracil = 6,7-dimethyl-8-(1-D-ribityl)lumazine + phosphate + 2 H2O + H(+)</text>
        <dbReference type="Rhea" id="RHEA:26152"/>
        <dbReference type="ChEBI" id="CHEBI:15377"/>
        <dbReference type="ChEBI" id="CHEBI:15378"/>
        <dbReference type="ChEBI" id="CHEBI:15934"/>
        <dbReference type="ChEBI" id="CHEBI:43474"/>
        <dbReference type="ChEBI" id="CHEBI:58201"/>
        <dbReference type="ChEBI" id="CHEBI:58830"/>
        <dbReference type="EC" id="2.5.1.78"/>
    </reaction>
</comment>
<comment type="pathway">
    <text evidence="1">Cofactor biosynthesis; riboflavin biosynthesis; riboflavin from 2-hydroxy-3-oxobutyl phosphate and 5-amino-6-(D-ribitylamino)uracil: step 1/2.</text>
</comment>
<comment type="similarity">
    <text evidence="1">Belongs to the DMRL synthase family.</text>
</comment>
<feature type="chain" id="PRO_1000040529" description="6,7-dimethyl-8-ribityllumazine synthase">
    <location>
        <begin position="1"/>
        <end position="156"/>
    </location>
</feature>
<feature type="active site" description="Proton donor" evidence="1">
    <location>
        <position position="89"/>
    </location>
</feature>
<feature type="binding site" evidence="1">
    <location>
        <position position="23"/>
    </location>
    <ligand>
        <name>5-amino-6-(D-ribitylamino)uracil</name>
        <dbReference type="ChEBI" id="CHEBI:15934"/>
    </ligand>
</feature>
<feature type="binding site" evidence="1">
    <location>
        <begin position="57"/>
        <end position="59"/>
    </location>
    <ligand>
        <name>5-amino-6-(D-ribitylamino)uracil</name>
        <dbReference type="ChEBI" id="CHEBI:15934"/>
    </ligand>
</feature>
<feature type="binding site" evidence="1">
    <location>
        <begin position="81"/>
        <end position="83"/>
    </location>
    <ligand>
        <name>5-amino-6-(D-ribitylamino)uracil</name>
        <dbReference type="ChEBI" id="CHEBI:15934"/>
    </ligand>
</feature>
<feature type="binding site" evidence="1">
    <location>
        <begin position="86"/>
        <end position="87"/>
    </location>
    <ligand>
        <name>(2S)-2-hydroxy-3-oxobutyl phosphate</name>
        <dbReference type="ChEBI" id="CHEBI:58830"/>
    </ligand>
</feature>
<feature type="binding site" evidence="1">
    <location>
        <position position="114"/>
    </location>
    <ligand>
        <name>5-amino-6-(D-ribitylamino)uracil</name>
        <dbReference type="ChEBI" id="CHEBI:15934"/>
    </ligand>
</feature>
<feature type="binding site" evidence="1">
    <location>
        <position position="128"/>
    </location>
    <ligand>
        <name>(2S)-2-hydroxy-3-oxobutyl phosphate</name>
        <dbReference type="ChEBI" id="CHEBI:58830"/>
    </ligand>
</feature>
<accession>A6QBK7</accession>
<gene>
    <name evidence="1" type="primary">ribH</name>
    <name type="ordered locus">SUN_1919</name>
</gene>
<organism>
    <name type="scientific">Sulfurovum sp. (strain NBC37-1)</name>
    <dbReference type="NCBI Taxonomy" id="387093"/>
    <lineage>
        <taxon>Bacteria</taxon>
        <taxon>Pseudomonadati</taxon>
        <taxon>Campylobacterota</taxon>
        <taxon>Epsilonproteobacteria</taxon>
        <taxon>Campylobacterales</taxon>
        <taxon>Sulfurovaceae</taxon>
        <taxon>Sulfurovum</taxon>
    </lineage>
</organism>
<keyword id="KW-0686">Riboflavin biosynthesis</keyword>
<keyword id="KW-0808">Transferase</keyword>
<evidence type="ECO:0000255" key="1">
    <source>
        <dbReference type="HAMAP-Rule" id="MF_00178"/>
    </source>
</evidence>
<proteinExistence type="inferred from homology"/>
<sequence>MKIVEGNLSVDKSKKVAIINARFNHFITDRLVEGAKDAYARHGGNPEELDLILVPGAFEIPFALDKALASGKYDAVCCLGAVIRGATPHFDYVSAEATKGVANVTLKYGKPATFGVLTVDSIEQAIERAGTKAGNKGAEAMAGLIELINLYGSLEK</sequence>
<reference key="1">
    <citation type="journal article" date="2007" name="Proc. Natl. Acad. Sci. U.S.A.">
        <title>Deep-sea vent epsilon-proteobacterial genomes provide insights into emergence of pathogens.</title>
        <authorList>
            <person name="Nakagawa S."/>
            <person name="Takaki Y."/>
            <person name="Shimamura S."/>
            <person name="Reysenbach A.-L."/>
            <person name="Takai K."/>
            <person name="Horikoshi K."/>
        </authorList>
    </citation>
    <scope>NUCLEOTIDE SEQUENCE [LARGE SCALE GENOMIC DNA]</scope>
    <source>
        <strain>NBC37-1</strain>
    </source>
</reference>